<organism>
    <name type="scientific">Salmonella schwarzengrund (strain CVM19633)</name>
    <dbReference type="NCBI Taxonomy" id="439843"/>
    <lineage>
        <taxon>Bacteria</taxon>
        <taxon>Pseudomonadati</taxon>
        <taxon>Pseudomonadota</taxon>
        <taxon>Gammaproteobacteria</taxon>
        <taxon>Enterobacterales</taxon>
        <taxon>Enterobacteriaceae</taxon>
        <taxon>Salmonella</taxon>
    </lineage>
</organism>
<gene>
    <name evidence="1" type="primary">ppnP</name>
    <name type="ordered locus">SeSA_A0447</name>
</gene>
<keyword id="KW-0328">Glycosyltransferase</keyword>
<keyword id="KW-0808">Transferase</keyword>
<sequence>MLQSNEYFSGKVKSIGFTSSSTGRASVGVMAEGEYTFGTAEPEEMTVVSGALKVLLPGTVEWKVYTAGEVFNVPGHSEFHLQVAEPTSYLCRYL</sequence>
<proteinExistence type="inferred from homology"/>
<protein>
    <recommendedName>
        <fullName evidence="1">Pyrimidine/purine nucleoside phosphorylase</fullName>
        <ecNumber evidence="1">2.4.2.1</ecNumber>
        <ecNumber evidence="1">2.4.2.2</ecNumber>
    </recommendedName>
    <alternativeName>
        <fullName evidence="1">Adenosine phosphorylase</fullName>
    </alternativeName>
    <alternativeName>
        <fullName evidence="1">Cytidine phosphorylase</fullName>
    </alternativeName>
    <alternativeName>
        <fullName evidence="1">Guanosine phosphorylase</fullName>
    </alternativeName>
    <alternativeName>
        <fullName evidence="1">Inosine phosphorylase</fullName>
    </alternativeName>
    <alternativeName>
        <fullName evidence="1">Thymidine phosphorylase</fullName>
    </alternativeName>
    <alternativeName>
        <fullName evidence="1">Uridine phosphorylase</fullName>
    </alternativeName>
    <alternativeName>
        <fullName evidence="1">Xanthosine phosphorylase</fullName>
    </alternativeName>
</protein>
<accession>B4TZG4</accession>
<dbReference type="EC" id="2.4.2.1" evidence="1"/>
<dbReference type="EC" id="2.4.2.2" evidence="1"/>
<dbReference type="EMBL" id="CP001127">
    <property type="protein sequence ID" value="ACF92163.1"/>
    <property type="molecule type" value="Genomic_DNA"/>
</dbReference>
<dbReference type="RefSeq" id="WP_000941953.1">
    <property type="nucleotide sequence ID" value="NC_011094.1"/>
</dbReference>
<dbReference type="SMR" id="B4TZG4"/>
<dbReference type="KEGG" id="sew:SeSA_A0447"/>
<dbReference type="HOGENOM" id="CLU_157874_0_0_6"/>
<dbReference type="Proteomes" id="UP000001865">
    <property type="component" value="Chromosome"/>
</dbReference>
<dbReference type="GO" id="GO:0005829">
    <property type="term" value="C:cytosol"/>
    <property type="evidence" value="ECO:0007669"/>
    <property type="project" value="TreeGrafter"/>
</dbReference>
<dbReference type="GO" id="GO:0047975">
    <property type="term" value="F:guanosine phosphorylase activity"/>
    <property type="evidence" value="ECO:0007669"/>
    <property type="project" value="UniProtKB-EC"/>
</dbReference>
<dbReference type="GO" id="GO:0004731">
    <property type="term" value="F:purine-nucleoside phosphorylase activity"/>
    <property type="evidence" value="ECO:0007669"/>
    <property type="project" value="UniProtKB-UniRule"/>
</dbReference>
<dbReference type="GO" id="GO:0009032">
    <property type="term" value="F:thymidine phosphorylase activity"/>
    <property type="evidence" value="ECO:0007669"/>
    <property type="project" value="UniProtKB-EC"/>
</dbReference>
<dbReference type="GO" id="GO:0004850">
    <property type="term" value="F:uridine phosphorylase activity"/>
    <property type="evidence" value="ECO:0007669"/>
    <property type="project" value="UniProtKB-EC"/>
</dbReference>
<dbReference type="CDD" id="cd20296">
    <property type="entry name" value="cupin_PpnP-like"/>
    <property type="match status" value="1"/>
</dbReference>
<dbReference type="FunFam" id="2.60.120.10:FF:000016">
    <property type="entry name" value="Pyrimidine/purine nucleoside phosphorylase"/>
    <property type="match status" value="1"/>
</dbReference>
<dbReference type="Gene3D" id="2.60.120.10">
    <property type="entry name" value="Jelly Rolls"/>
    <property type="match status" value="1"/>
</dbReference>
<dbReference type="HAMAP" id="MF_01537">
    <property type="entry name" value="Nucleos_phosphorylase_PpnP"/>
    <property type="match status" value="1"/>
</dbReference>
<dbReference type="InterPro" id="IPR009664">
    <property type="entry name" value="Ppnp"/>
</dbReference>
<dbReference type="InterPro" id="IPR014710">
    <property type="entry name" value="RmlC-like_jellyroll"/>
</dbReference>
<dbReference type="InterPro" id="IPR011051">
    <property type="entry name" value="RmlC_Cupin_sf"/>
</dbReference>
<dbReference type="NCBIfam" id="NF007875">
    <property type="entry name" value="PRK10579.1"/>
    <property type="match status" value="1"/>
</dbReference>
<dbReference type="PANTHER" id="PTHR36540">
    <property type="entry name" value="PYRIMIDINE/PURINE NUCLEOSIDE PHOSPHORYLASE"/>
    <property type="match status" value="1"/>
</dbReference>
<dbReference type="PANTHER" id="PTHR36540:SF1">
    <property type="entry name" value="PYRIMIDINE_PURINE NUCLEOSIDE PHOSPHORYLASE"/>
    <property type="match status" value="1"/>
</dbReference>
<dbReference type="Pfam" id="PF06865">
    <property type="entry name" value="Ppnp"/>
    <property type="match status" value="1"/>
</dbReference>
<dbReference type="SUPFAM" id="SSF51182">
    <property type="entry name" value="RmlC-like cupins"/>
    <property type="match status" value="1"/>
</dbReference>
<name>PPNP_SALSV</name>
<feature type="chain" id="PRO_1000198680" description="Pyrimidine/purine nucleoside phosphorylase">
    <location>
        <begin position="1"/>
        <end position="94"/>
    </location>
</feature>
<evidence type="ECO:0000255" key="1">
    <source>
        <dbReference type="HAMAP-Rule" id="MF_01537"/>
    </source>
</evidence>
<comment type="function">
    <text evidence="1">Catalyzes the phosphorolysis of diverse nucleosides, yielding D-ribose 1-phosphate and the respective free bases. Can use uridine, adenosine, guanosine, cytidine, thymidine, inosine and xanthosine as substrates. Also catalyzes the reverse reactions.</text>
</comment>
<comment type="catalytic activity">
    <reaction evidence="1">
        <text>a purine D-ribonucleoside + phosphate = a purine nucleobase + alpha-D-ribose 1-phosphate</text>
        <dbReference type="Rhea" id="RHEA:19805"/>
        <dbReference type="ChEBI" id="CHEBI:26386"/>
        <dbReference type="ChEBI" id="CHEBI:43474"/>
        <dbReference type="ChEBI" id="CHEBI:57720"/>
        <dbReference type="ChEBI" id="CHEBI:142355"/>
        <dbReference type="EC" id="2.4.2.1"/>
    </reaction>
</comment>
<comment type="catalytic activity">
    <reaction evidence="1">
        <text>adenosine + phosphate = alpha-D-ribose 1-phosphate + adenine</text>
        <dbReference type="Rhea" id="RHEA:27642"/>
        <dbReference type="ChEBI" id="CHEBI:16335"/>
        <dbReference type="ChEBI" id="CHEBI:16708"/>
        <dbReference type="ChEBI" id="CHEBI:43474"/>
        <dbReference type="ChEBI" id="CHEBI:57720"/>
        <dbReference type="EC" id="2.4.2.1"/>
    </reaction>
</comment>
<comment type="catalytic activity">
    <reaction evidence="1">
        <text>cytidine + phosphate = cytosine + alpha-D-ribose 1-phosphate</text>
        <dbReference type="Rhea" id="RHEA:52540"/>
        <dbReference type="ChEBI" id="CHEBI:16040"/>
        <dbReference type="ChEBI" id="CHEBI:17562"/>
        <dbReference type="ChEBI" id="CHEBI:43474"/>
        <dbReference type="ChEBI" id="CHEBI:57720"/>
        <dbReference type="EC" id="2.4.2.2"/>
    </reaction>
</comment>
<comment type="catalytic activity">
    <reaction evidence="1">
        <text>guanosine + phosphate = alpha-D-ribose 1-phosphate + guanine</text>
        <dbReference type="Rhea" id="RHEA:13233"/>
        <dbReference type="ChEBI" id="CHEBI:16235"/>
        <dbReference type="ChEBI" id="CHEBI:16750"/>
        <dbReference type="ChEBI" id="CHEBI:43474"/>
        <dbReference type="ChEBI" id="CHEBI:57720"/>
        <dbReference type="EC" id="2.4.2.1"/>
    </reaction>
</comment>
<comment type="catalytic activity">
    <reaction evidence="1">
        <text>inosine + phosphate = alpha-D-ribose 1-phosphate + hypoxanthine</text>
        <dbReference type="Rhea" id="RHEA:27646"/>
        <dbReference type="ChEBI" id="CHEBI:17368"/>
        <dbReference type="ChEBI" id="CHEBI:17596"/>
        <dbReference type="ChEBI" id="CHEBI:43474"/>
        <dbReference type="ChEBI" id="CHEBI:57720"/>
        <dbReference type="EC" id="2.4.2.1"/>
    </reaction>
</comment>
<comment type="catalytic activity">
    <reaction evidence="1">
        <text>thymidine + phosphate = 2-deoxy-alpha-D-ribose 1-phosphate + thymine</text>
        <dbReference type="Rhea" id="RHEA:16037"/>
        <dbReference type="ChEBI" id="CHEBI:17748"/>
        <dbReference type="ChEBI" id="CHEBI:17821"/>
        <dbReference type="ChEBI" id="CHEBI:43474"/>
        <dbReference type="ChEBI" id="CHEBI:57259"/>
        <dbReference type="EC" id="2.4.2.2"/>
    </reaction>
</comment>
<comment type="catalytic activity">
    <reaction evidence="1">
        <text>uridine + phosphate = alpha-D-ribose 1-phosphate + uracil</text>
        <dbReference type="Rhea" id="RHEA:24388"/>
        <dbReference type="ChEBI" id="CHEBI:16704"/>
        <dbReference type="ChEBI" id="CHEBI:17568"/>
        <dbReference type="ChEBI" id="CHEBI:43474"/>
        <dbReference type="ChEBI" id="CHEBI:57720"/>
        <dbReference type="EC" id="2.4.2.2"/>
    </reaction>
</comment>
<comment type="catalytic activity">
    <reaction evidence="1">
        <text>xanthosine + phosphate = alpha-D-ribose 1-phosphate + xanthine</text>
        <dbReference type="Rhea" id="RHEA:27638"/>
        <dbReference type="ChEBI" id="CHEBI:17712"/>
        <dbReference type="ChEBI" id="CHEBI:18107"/>
        <dbReference type="ChEBI" id="CHEBI:43474"/>
        <dbReference type="ChEBI" id="CHEBI:57720"/>
        <dbReference type="EC" id="2.4.2.1"/>
    </reaction>
</comment>
<comment type="similarity">
    <text evidence="1">Belongs to the nucleoside phosphorylase PpnP family.</text>
</comment>
<reference key="1">
    <citation type="journal article" date="2011" name="J. Bacteriol.">
        <title>Comparative genomics of 28 Salmonella enterica isolates: evidence for CRISPR-mediated adaptive sublineage evolution.</title>
        <authorList>
            <person name="Fricke W.F."/>
            <person name="Mammel M.K."/>
            <person name="McDermott P.F."/>
            <person name="Tartera C."/>
            <person name="White D.G."/>
            <person name="Leclerc J.E."/>
            <person name="Ravel J."/>
            <person name="Cebula T.A."/>
        </authorList>
    </citation>
    <scope>NUCLEOTIDE SEQUENCE [LARGE SCALE GENOMIC DNA]</scope>
    <source>
        <strain>CVM19633</strain>
    </source>
</reference>